<accession>O54457</accession>
<name>PPSA_ENTAG</name>
<sequence>MSSKGEQPLVLWYNQLGMHDVDRVGGKNPSLGEMITNLSSLGVSVPNGFATTSYAFNLFLD</sequence>
<proteinExistence type="inferred from homology"/>
<protein>
    <recommendedName>
        <fullName>Phosphoenolpyruvate synthase</fullName>
        <shortName>PEP synthase</shortName>
        <ecNumber>2.7.9.2</ecNumber>
    </recommendedName>
    <alternativeName>
        <fullName>Pyruvate, water dikinase</fullName>
    </alternativeName>
</protein>
<feature type="chain" id="PRO_0000147035" description="Phosphoenolpyruvate synthase">
    <location>
        <begin position="1"/>
        <end position="61" status="greater than"/>
    </location>
</feature>
<feature type="non-terminal residue">
    <location>
        <position position="61"/>
    </location>
</feature>
<gene>
    <name type="primary">ppsA</name>
</gene>
<dbReference type="EC" id="2.7.9.2"/>
<dbReference type="EMBL" id="U93355">
    <property type="protein sequence ID" value="AAB96398.1"/>
    <property type="molecule type" value="Genomic_DNA"/>
</dbReference>
<dbReference type="SMR" id="O54457"/>
<dbReference type="STRING" id="549.BEE12_15415"/>
<dbReference type="eggNOG" id="COG0574">
    <property type="taxonomic scope" value="Bacteria"/>
</dbReference>
<dbReference type="eggNOG" id="COG1080">
    <property type="taxonomic scope" value="Bacteria"/>
</dbReference>
<dbReference type="UniPathway" id="UPA00138"/>
<dbReference type="GO" id="GO:0005524">
    <property type="term" value="F:ATP binding"/>
    <property type="evidence" value="ECO:0007669"/>
    <property type="project" value="UniProtKB-KW"/>
</dbReference>
<dbReference type="GO" id="GO:0046872">
    <property type="term" value="F:metal ion binding"/>
    <property type="evidence" value="ECO:0007669"/>
    <property type="project" value="UniProtKB-KW"/>
</dbReference>
<dbReference type="GO" id="GO:0008986">
    <property type="term" value="F:pyruvate, water dikinase activity"/>
    <property type="evidence" value="ECO:0007669"/>
    <property type="project" value="UniProtKB-EC"/>
</dbReference>
<dbReference type="GO" id="GO:0006094">
    <property type="term" value="P:gluconeogenesis"/>
    <property type="evidence" value="ECO:0007669"/>
    <property type="project" value="UniProtKB-UniPathway"/>
</dbReference>
<dbReference type="Gene3D" id="3.30.1490.20">
    <property type="entry name" value="ATP-grasp fold, A domain"/>
    <property type="match status" value="1"/>
</dbReference>
<dbReference type="InterPro" id="IPR013815">
    <property type="entry name" value="ATP_grasp_subdomain_1"/>
</dbReference>
<dbReference type="InterPro" id="IPR006319">
    <property type="entry name" value="PEP_synth"/>
</dbReference>
<dbReference type="InterPro" id="IPR002192">
    <property type="entry name" value="PPDK_AMP/ATP-bd"/>
</dbReference>
<dbReference type="PANTHER" id="PTHR43030">
    <property type="entry name" value="PHOSPHOENOLPYRUVATE SYNTHASE"/>
    <property type="match status" value="1"/>
</dbReference>
<dbReference type="PANTHER" id="PTHR43030:SF1">
    <property type="entry name" value="PHOSPHOENOLPYRUVATE SYNTHASE"/>
    <property type="match status" value="1"/>
</dbReference>
<dbReference type="Pfam" id="PF01326">
    <property type="entry name" value="PPDK_N"/>
    <property type="match status" value="1"/>
</dbReference>
<dbReference type="SUPFAM" id="SSF56059">
    <property type="entry name" value="Glutathione synthetase ATP-binding domain-like"/>
    <property type="match status" value="1"/>
</dbReference>
<comment type="function">
    <text evidence="1">Catalyzes the phosphorylation of pyruvate to phosphoenolpyruvate.</text>
</comment>
<comment type="catalytic activity">
    <reaction>
        <text>pyruvate + ATP + H2O = phosphoenolpyruvate + AMP + phosphate + 2 H(+)</text>
        <dbReference type="Rhea" id="RHEA:11364"/>
        <dbReference type="ChEBI" id="CHEBI:15361"/>
        <dbReference type="ChEBI" id="CHEBI:15377"/>
        <dbReference type="ChEBI" id="CHEBI:15378"/>
        <dbReference type="ChEBI" id="CHEBI:30616"/>
        <dbReference type="ChEBI" id="CHEBI:43474"/>
        <dbReference type="ChEBI" id="CHEBI:58702"/>
        <dbReference type="ChEBI" id="CHEBI:456215"/>
        <dbReference type="EC" id="2.7.9.2"/>
    </reaction>
</comment>
<comment type="cofactor">
    <cofactor evidence="1">
        <name>Mg(2+)</name>
        <dbReference type="ChEBI" id="CHEBI:18420"/>
    </cofactor>
</comment>
<comment type="pathway">
    <text>Carbohydrate biosynthesis; gluconeogenesis.</text>
</comment>
<comment type="domain">
    <text evidence="1">The N-terminal domain contains the ATP/Pi binding site, the central domain the pyrophosphate/phosphate carrier histidine, and the C-terminal domain the pyruvate binding site.</text>
</comment>
<comment type="miscellaneous">
    <text evidence="1">The reaction takes place in three steps, mediated by a phosphocarrier histidine residue located on the surface of the central domain. The two first partial reactions are catalyzed at an active site located on the N-terminal domain, and the third partial reaction is catalyzed at an active site located on the C-terminal domain. For catalytic turnover, the central domain swivels from the concave surface of the N-terminal domain to that of the C-terminal domain (By similarity).</text>
</comment>
<comment type="similarity">
    <text evidence="2">Belongs to the PEP-utilizing enzyme family.</text>
</comment>
<keyword id="KW-0067">ATP-binding</keyword>
<keyword id="KW-0418">Kinase</keyword>
<keyword id="KW-0460">Magnesium</keyword>
<keyword id="KW-0479">Metal-binding</keyword>
<keyword id="KW-0547">Nucleotide-binding</keyword>
<keyword id="KW-0597">Phosphoprotein</keyword>
<keyword id="KW-0808">Transferase</keyword>
<organism>
    <name type="scientific">Enterobacter agglomerans</name>
    <name type="common">Erwinia herbicola</name>
    <name type="synonym">Pantoea agglomerans</name>
    <dbReference type="NCBI Taxonomy" id="549"/>
    <lineage>
        <taxon>Bacteria</taxon>
        <taxon>Pseudomonadati</taxon>
        <taxon>Pseudomonadota</taxon>
        <taxon>Gammaproteobacteria</taxon>
        <taxon>Enterobacterales</taxon>
        <taxon>Erwiniaceae</taxon>
        <taxon>Pantoea</taxon>
        <taxon>Pantoea agglomerans group</taxon>
    </lineage>
</organism>
<reference key="1">
    <citation type="journal article" date="1998" name="J. Bacteriol.">
        <title>Substrate ambiguity of 3-deoxy-D-manno-octulosonate 8-phosphate synthase from Neisseria gonorrhoeae in the context of its membership in a protein family containing a subset of 3-deoxy-D-arabino-heptulosonate 7-phosphate synthases.</title>
        <authorList>
            <person name="Subramaniam P.S."/>
            <person name="Xie G."/>
            <person name="Xia T."/>
            <person name="Jensen R.A."/>
        </authorList>
    </citation>
    <scope>NUCLEOTIDE SEQUENCE [GENOMIC DNA]</scope>
</reference>
<evidence type="ECO:0000250" key="1"/>
<evidence type="ECO:0000305" key="2"/>